<proteinExistence type="inferred from homology"/>
<evidence type="ECO:0000255" key="1">
    <source>
        <dbReference type="HAMAP-Rule" id="MF_01200"/>
    </source>
</evidence>
<reference key="1">
    <citation type="submission" date="2006-12" db="EMBL/GenBank/DDBJ databases">
        <authorList>
            <person name="Fouts D.E."/>
            <person name="Nelson K.E."/>
            <person name="Sebastian Y."/>
        </authorList>
    </citation>
    <scope>NUCLEOTIDE SEQUENCE [LARGE SCALE GENOMIC DNA]</scope>
    <source>
        <strain>81-176</strain>
    </source>
</reference>
<comment type="function">
    <text evidence="1">Catalyzes the decarboxylation of orotidine 5'-monophosphate (OMP) to uridine 5'-monophosphate (UMP).</text>
</comment>
<comment type="catalytic activity">
    <reaction evidence="1">
        <text>orotidine 5'-phosphate + H(+) = UMP + CO2</text>
        <dbReference type="Rhea" id="RHEA:11596"/>
        <dbReference type="ChEBI" id="CHEBI:15378"/>
        <dbReference type="ChEBI" id="CHEBI:16526"/>
        <dbReference type="ChEBI" id="CHEBI:57538"/>
        <dbReference type="ChEBI" id="CHEBI:57865"/>
        <dbReference type="EC" id="4.1.1.23"/>
    </reaction>
</comment>
<comment type="pathway">
    <text evidence="1">Pyrimidine metabolism; UMP biosynthesis via de novo pathway; UMP from orotate: step 2/2.</text>
</comment>
<comment type="subunit">
    <text evidence="1">Homodimer.</text>
</comment>
<comment type="similarity">
    <text evidence="1">Belongs to the OMP decarboxylase family. Type 1 subfamily.</text>
</comment>
<name>PYRF_CAMJJ</name>
<protein>
    <recommendedName>
        <fullName evidence="1">Orotidine 5'-phosphate decarboxylase</fullName>
        <ecNumber evidence="1">4.1.1.23</ecNumber>
    </recommendedName>
    <alternativeName>
        <fullName evidence="1">OMP decarboxylase</fullName>
        <shortName evidence="1">OMPDCase</shortName>
        <shortName evidence="1">OMPdecase</shortName>
    </alternativeName>
</protein>
<organism>
    <name type="scientific">Campylobacter jejuni subsp. jejuni serotype O:23/36 (strain 81-176)</name>
    <dbReference type="NCBI Taxonomy" id="354242"/>
    <lineage>
        <taxon>Bacteria</taxon>
        <taxon>Pseudomonadati</taxon>
        <taxon>Campylobacterota</taxon>
        <taxon>Epsilonproteobacteria</taxon>
        <taxon>Campylobacterales</taxon>
        <taxon>Campylobacteraceae</taxon>
        <taxon>Campylobacter</taxon>
    </lineage>
</organism>
<keyword id="KW-0210">Decarboxylase</keyword>
<keyword id="KW-0456">Lyase</keyword>
<keyword id="KW-0665">Pyrimidine biosynthesis</keyword>
<gene>
    <name evidence="1" type="primary">pyrF</name>
    <name type="ordered locus">CJJ81176_0404</name>
</gene>
<sequence length="226" mass="25941">MKLCVALDLSTKEECLQLAKELKNLDIWLKVGLRAYLRDGFKFIEELKKVDDFKIFLDLKIHDIPNTMADACEEISKLGVDMINIHASAGKIAMQEVMTRLSKFSKRPLVLAVSALTSFDEENFFSIYRQKIEEAVINFSKISYENGLDGMVCSVFESKIIKEHTQRNFLTLTPGIRPFGEKNDDQKRVANLTMARENLSDFIVVGRPIYKDNNPRKICEKILQEI</sequence>
<accession>A1VYA1</accession>
<feature type="chain" id="PRO_1000065901" description="Orotidine 5'-phosphate decarboxylase">
    <location>
        <begin position="1"/>
        <end position="226"/>
    </location>
</feature>
<feature type="active site" description="Proton donor" evidence="1">
    <location>
        <position position="60"/>
    </location>
</feature>
<feature type="binding site" evidence="1">
    <location>
        <position position="8"/>
    </location>
    <ligand>
        <name>substrate</name>
    </ligand>
</feature>
<feature type="binding site" evidence="1">
    <location>
        <position position="30"/>
    </location>
    <ligand>
        <name>substrate</name>
    </ligand>
</feature>
<feature type="binding site" evidence="1">
    <location>
        <begin position="58"/>
        <end position="67"/>
    </location>
    <ligand>
        <name>substrate</name>
    </ligand>
</feature>
<feature type="binding site" evidence="1">
    <location>
        <position position="117"/>
    </location>
    <ligand>
        <name>substrate</name>
    </ligand>
</feature>
<feature type="binding site" evidence="1">
    <location>
        <position position="177"/>
    </location>
    <ligand>
        <name>substrate</name>
    </ligand>
</feature>
<feature type="binding site" evidence="1">
    <location>
        <position position="186"/>
    </location>
    <ligand>
        <name>substrate</name>
    </ligand>
</feature>
<feature type="binding site" evidence="1">
    <location>
        <position position="206"/>
    </location>
    <ligand>
        <name>substrate</name>
    </ligand>
</feature>
<feature type="binding site" evidence="1">
    <location>
        <position position="207"/>
    </location>
    <ligand>
        <name>substrate</name>
    </ligand>
</feature>
<dbReference type="EC" id="4.1.1.23" evidence="1"/>
<dbReference type="EMBL" id="CP000538">
    <property type="protein sequence ID" value="EAQ73091.1"/>
    <property type="molecule type" value="Genomic_DNA"/>
</dbReference>
<dbReference type="SMR" id="A1VYA1"/>
<dbReference type="KEGG" id="cjj:CJJ81176_0404"/>
<dbReference type="eggNOG" id="COG0284">
    <property type="taxonomic scope" value="Bacteria"/>
</dbReference>
<dbReference type="HOGENOM" id="CLU_067069_1_1_7"/>
<dbReference type="UniPathway" id="UPA00070">
    <property type="reaction ID" value="UER00120"/>
</dbReference>
<dbReference type="Proteomes" id="UP000000646">
    <property type="component" value="Chromosome"/>
</dbReference>
<dbReference type="GO" id="GO:0005829">
    <property type="term" value="C:cytosol"/>
    <property type="evidence" value="ECO:0007669"/>
    <property type="project" value="TreeGrafter"/>
</dbReference>
<dbReference type="GO" id="GO:0004590">
    <property type="term" value="F:orotidine-5'-phosphate decarboxylase activity"/>
    <property type="evidence" value="ECO:0007669"/>
    <property type="project" value="UniProtKB-UniRule"/>
</dbReference>
<dbReference type="GO" id="GO:0006207">
    <property type="term" value="P:'de novo' pyrimidine nucleobase biosynthetic process"/>
    <property type="evidence" value="ECO:0007669"/>
    <property type="project" value="InterPro"/>
</dbReference>
<dbReference type="GO" id="GO:0044205">
    <property type="term" value="P:'de novo' UMP biosynthetic process"/>
    <property type="evidence" value="ECO:0007669"/>
    <property type="project" value="UniProtKB-UniRule"/>
</dbReference>
<dbReference type="CDD" id="cd04725">
    <property type="entry name" value="OMP_decarboxylase_like"/>
    <property type="match status" value="1"/>
</dbReference>
<dbReference type="Gene3D" id="3.20.20.70">
    <property type="entry name" value="Aldolase class I"/>
    <property type="match status" value="1"/>
</dbReference>
<dbReference type="HAMAP" id="MF_01200_B">
    <property type="entry name" value="OMPdecase_type1_B"/>
    <property type="match status" value="1"/>
</dbReference>
<dbReference type="InterPro" id="IPR013785">
    <property type="entry name" value="Aldolase_TIM"/>
</dbReference>
<dbReference type="InterPro" id="IPR014732">
    <property type="entry name" value="OMPdecase"/>
</dbReference>
<dbReference type="InterPro" id="IPR018089">
    <property type="entry name" value="OMPdecase_AS"/>
</dbReference>
<dbReference type="InterPro" id="IPR047596">
    <property type="entry name" value="OMPdecase_bac"/>
</dbReference>
<dbReference type="InterPro" id="IPR001754">
    <property type="entry name" value="OMPdeCOase_dom"/>
</dbReference>
<dbReference type="InterPro" id="IPR011060">
    <property type="entry name" value="RibuloseP-bd_barrel"/>
</dbReference>
<dbReference type="NCBIfam" id="NF001273">
    <property type="entry name" value="PRK00230.1"/>
    <property type="match status" value="1"/>
</dbReference>
<dbReference type="NCBIfam" id="TIGR01740">
    <property type="entry name" value="pyrF"/>
    <property type="match status" value="1"/>
</dbReference>
<dbReference type="PANTHER" id="PTHR32119">
    <property type="entry name" value="OROTIDINE 5'-PHOSPHATE DECARBOXYLASE"/>
    <property type="match status" value="1"/>
</dbReference>
<dbReference type="PANTHER" id="PTHR32119:SF2">
    <property type="entry name" value="OROTIDINE 5'-PHOSPHATE DECARBOXYLASE"/>
    <property type="match status" value="1"/>
</dbReference>
<dbReference type="Pfam" id="PF00215">
    <property type="entry name" value="OMPdecase"/>
    <property type="match status" value="1"/>
</dbReference>
<dbReference type="SMART" id="SM00934">
    <property type="entry name" value="OMPdecase"/>
    <property type="match status" value="1"/>
</dbReference>
<dbReference type="SUPFAM" id="SSF51366">
    <property type="entry name" value="Ribulose-phoshate binding barrel"/>
    <property type="match status" value="1"/>
</dbReference>
<dbReference type="PROSITE" id="PS00156">
    <property type="entry name" value="OMPDECASE"/>
    <property type="match status" value="1"/>
</dbReference>